<evidence type="ECO:0000250" key="1"/>
<evidence type="ECO:0000305" key="2"/>
<proteinExistence type="inferred from homology"/>
<name>BIOF_MYCGI</name>
<feature type="chain" id="PRO_0000381035" description="8-amino-7-oxononanoate synthase">
    <location>
        <begin position="1"/>
        <end position="380"/>
    </location>
</feature>
<feature type="binding site" evidence="1">
    <location>
        <position position="26"/>
    </location>
    <ligand>
        <name>substrate</name>
    </ligand>
</feature>
<feature type="binding site" evidence="1">
    <location>
        <begin position="104"/>
        <end position="105"/>
    </location>
    <ligand>
        <name>pyridoxal 5'-phosphate</name>
        <dbReference type="ChEBI" id="CHEBI:597326"/>
    </ligand>
</feature>
<feature type="binding site" evidence="1">
    <location>
        <position position="129"/>
    </location>
    <ligand>
        <name>substrate</name>
    </ligand>
</feature>
<feature type="binding site" evidence="1">
    <location>
        <position position="175"/>
    </location>
    <ligand>
        <name>pyridoxal 5'-phosphate</name>
        <dbReference type="ChEBI" id="CHEBI:597326"/>
    </ligand>
</feature>
<feature type="binding site" evidence="1">
    <location>
        <begin position="200"/>
        <end position="203"/>
    </location>
    <ligand>
        <name>pyridoxal 5'-phosphate</name>
        <dbReference type="ChEBI" id="CHEBI:597326"/>
    </ligand>
</feature>
<feature type="binding site" evidence="1">
    <location>
        <begin position="232"/>
        <end position="235"/>
    </location>
    <ligand>
        <name>pyridoxal 5'-phosphate</name>
        <dbReference type="ChEBI" id="CHEBI:597326"/>
    </ligand>
</feature>
<feature type="binding site" evidence="1">
    <location>
        <position position="345"/>
    </location>
    <ligand>
        <name>substrate</name>
    </ligand>
</feature>
<feature type="modified residue" description="N6-(pyridoxal phosphate)lysine" evidence="1">
    <location>
        <position position="235"/>
    </location>
</feature>
<reference key="1">
    <citation type="submission" date="2007-04" db="EMBL/GenBank/DDBJ databases">
        <title>Complete sequence of chromosome of Mycobacterium gilvum PYR-GCK.</title>
        <authorList>
            <consortium name="US DOE Joint Genome Institute"/>
            <person name="Copeland A."/>
            <person name="Lucas S."/>
            <person name="Lapidus A."/>
            <person name="Barry K."/>
            <person name="Detter J.C."/>
            <person name="Glavina del Rio T."/>
            <person name="Hammon N."/>
            <person name="Israni S."/>
            <person name="Dalin E."/>
            <person name="Tice H."/>
            <person name="Pitluck S."/>
            <person name="Chain P."/>
            <person name="Malfatti S."/>
            <person name="Shin M."/>
            <person name="Vergez L."/>
            <person name="Schmutz J."/>
            <person name="Larimer F."/>
            <person name="Land M."/>
            <person name="Hauser L."/>
            <person name="Kyrpides N."/>
            <person name="Mikhailova N."/>
            <person name="Miller C."/>
            <person name="Richardson P."/>
        </authorList>
    </citation>
    <scope>NUCLEOTIDE SEQUENCE [LARGE SCALE GENOMIC DNA]</scope>
    <source>
        <strain>PYR-GCK</strain>
    </source>
</reference>
<accession>A4T9L3</accession>
<gene>
    <name type="ordered locus">Mflv_3628</name>
</gene>
<comment type="function">
    <text evidence="1">Catalyzes the decarboxylative condensation of pimeloyl-[acyl-carrier protein] and L-alanine to produce 8-amino-7-oxononanoate (AON), [acyl-carrier protein], and carbon dioxide.</text>
</comment>
<comment type="catalytic activity">
    <reaction>
        <text>6-carboxyhexanoyl-[ACP] + L-alanine + H(+) = (8S)-8-amino-7-oxononanoate + holo-[ACP] + CO2</text>
        <dbReference type="Rhea" id="RHEA:42288"/>
        <dbReference type="Rhea" id="RHEA-COMP:9685"/>
        <dbReference type="Rhea" id="RHEA-COMP:9955"/>
        <dbReference type="ChEBI" id="CHEBI:15378"/>
        <dbReference type="ChEBI" id="CHEBI:16526"/>
        <dbReference type="ChEBI" id="CHEBI:57972"/>
        <dbReference type="ChEBI" id="CHEBI:64479"/>
        <dbReference type="ChEBI" id="CHEBI:78846"/>
        <dbReference type="ChEBI" id="CHEBI:149468"/>
        <dbReference type="EC" id="2.3.1.47"/>
    </reaction>
</comment>
<comment type="cofactor">
    <cofactor evidence="1">
        <name>pyridoxal 5'-phosphate</name>
        <dbReference type="ChEBI" id="CHEBI:597326"/>
    </cofactor>
</comment>
<comment type="pathway">
    <text>Cofactor biosynthesis; biotin biosynthesis.</text>
</comment>
<comment type="subunit">
    <text evidence="1">Homodimer.</text>
</comment>
<comment type="similarity">
    <text evidence="2">Belongs to the class-II pyridoxal-phosphate-dependent aminotransferase family. BioF subfamily.</text>
</comment>
<sequence length="380" mass="39420">MTRAGLSPLAWLDEVETQRRAAGLRRSLRARPPVGTVLDLASNDYLGLSQHPRVIDGGVAALRTWGAGATGSRLVTGNTELHEQFEDALASFVGADSALVFSSGYTANLGAVVALSGPGSLLVSDAYTHASLVDACRLSRARVVVTPHNDVAAVARALATRDEERAVVVTDSVFSADGDLAPLRELHDACRRHGALMIVDEAHGLGVRGDRGRGLLDEVGLAGAPDVVMTTTLSKALGSQGGVVLGPAAVRDHLIDAARPFIFDTGLAPAAVGAAHAALQVLVEEPWRAQRVLDHATTLAQICGVADVPSSAVVSVILGEPEVALAAAMGCLERGVRVGCFRPPTVPAGTSRLRLTARASLSDDEMALAREVLTDVLSRA</sequence>
<dbReference type="EC" id="2.3.1.47"/>
<dbReference type="EMBL" id="CP000656">
    <property type="protein sequence ID" value="ABP46102.1"/>
    <property type="molecule type" value="Genomic_DNA"/>
</dbReference>
<dbReference type="SMR" id="A4T9L3"/>
<dbReference type="STRING" id="350054.Mflv_3628"/>
<dbReference type="KEGG" id="mgi:Mflv_3628"/>
<dbReference type="eggNOG" id="COG0156">
    <property type="taxonomic scope" value="Bacteria"/>
</dbReference>
<dbReference type="HOGENOM" id="CLU_015846_11_2_11"/>
<dbReference type="OrthoDB" id="9807157at2"/>
<dbReference type="UniPathway" id="UPA00078"/>
<dbReference type="GO" id="GO:0008710">
    <property type="term" value="F:8-amino-7-oxononanoate synthase activity"/>
    <property type="evidence" value="ECO:0007669"/>
    <property type="project" value="UniProtKB-EC"/>
</dbReference>
<dbReference type="GO" id="GO:0030170">
    <property type="term" value="F:pyridoxal phosphate binding"/>
    <property type="evidence" value="ECO:0007669"/>
    <property type="project" value="InterPro"/>
</dbReference>
<dbReference type="GO" id="GO:0009102">
    <property type="term" value="P:biotin biosynthetic process"/>
    <property type="evidence" value="ECO:0007669"/>
    <property type="project" value="UniProtKB-UniPathway"/>
</dbReference>
<dbReference type="Gene3D" id="3.90.1150.10">
    <property type="entry name" value="Aspartate Aminotransferase, domain 1"/>
    <property type="match status" value="1"/>
</dbReference>
<dbReference type="Gene3D" id="3.40.640.10">
    <property type="entry name" value="Type I PLP-dependent aspartate aminotransferase-like (Major domain)"/>
    <property type="match status" value="1"/>
</dbReference>
<dbReference type="InterPro" id="IPR001917">
    <property type="entry name" value="Aminotrans_II_pyridoxalP_BS"/>
</dbReference>
<dbReference type="InterPro" id="IPR004839">
    <property type="entry name" value="Aminotransferase_I/II_large"/>
</dbReference>
<dbReference type="InterPro" id="IPR050087">
    <property type="entry name" value="AON_synthase_class-II"/>
</dbReference>
<dbReference type="InterPro" id="IPR015424">
    <property type="entry name" value="PyrdxlP-dep_Trfase"/>
</dbReference>
<dbReference type="InterPro" id="IPR015421">
    <property type="entry name" value="PyrdxlP-dep_Trfase_major"/>
</dbReference>
<dbReference type="InterPro" id="IPR015422">
    <property type="entry name" value="PyrdxlP-dep_Trfase_small"/>
</dbReference>
<dbReference type="PANTHER" id="PTHR13693:SF100">
    <property type="entry name" value="8-AMINO-7-OXONONANOATE SYNTHASE"/>
    <property type="match status" value="1"/>
</dbReference>
<dbReference type="PANTHER" id="PTHR13693">
    <property type="entry name" value="CLASS II AMINOTRANSFERASE/8-AMINO-7-OXONONANOATE SYNTHASE"/>
    <property type="match status" value="1"/>
</dbReference>
<dbReference type="Pfam" id="PF00155">
    <property type="entry name" value="Aminotran_1_2"/>
    <property type="match status" value="1"/>
</dbReference>
<dbReference type="SUPFAM" id="SSF53383">
    <property type="entry name" value="PLP-dependent transferases"/>
    <property type="match status" value="1"/>
</dbReference>
<dbReference type="PROSITE" id="PS00599">
    <property type="entry name" value="AA_TRANSFER_CLASS_2"/>
    <property type="match status" value="1"/>
</dbReference>
<protein>
    <recommendedName>
        <fullName>8-amino-7-oxononanoate synthase</fullName>
        <shortName>AONS</shortName>
        <ecNumber>2.3.1.47</ecNumber>
    </recommendedName>
    <alternativeName>
        <fullName>7-keto-8-amino-pelargonic acid synthase</fullName>
        <shortName>7-KAP synthase</shortName>
        <shortName>KAPA synthase</shortName>
    </alternativeName>
    <alternativeName>
        <fullName>8-amino-7-ketopelargonate synthase</fullName>
    </alternativeName>
    <alternativeName>
        <fullName>Alpha-oxoamine synthase</fullName>
    </alternativeName>
</protein>
<organism>
    <name type="scientific">Mycolicibacterium gilvum (strain PYR-GCK)</name>
    <name type="common">Mycobacterium gilvum (strain PYR-GCK)</name>
    <dbReference type="NCBI Taxonomy" id="350054"/>
    <lineage>
        <taxon>Bacteria</taxon>
        <taxon>Bacillati</taxon>
        <taxon>Actinomycetota</taxon>
        <taxon>Actinomycetes</taxon>
        <taxon>Mycobacteriales</taxon>
        <taxon>Mycobacteriaceae</taxon>
        <taxon>Mycolicibacterium</taxon>
    </lineage>
</organism>
<keyword id="KW-0012">Acyltransferase</keyword>
<keyword id="KW-0093">Biotin biosynthesis</keyword>
<keyword id="KW-0663">Pyridoxal phosphate</keyword>
<keyword id="KW-0808">Transferase</keyword>